<keyword id="KW-0012">Acyltransferase</keyword>
<keyword id="KW-0093">Biotin biosynthesis</keyword>
<keyword id="KW-0663">Pyridoxal phosphate</keyword>
<keyword id="KW-1185">Reference proteome</keyword>
<keyword id="KW-0808">Transferase</keyword>
<sequence length="392" mass="43284">MTKEFEFLKAELNSMKENHTWQDIKQLESMQGPSVTVNHQKVIQLSSNNYLGFTSHPRLINAAQEAVQQYGAGTGSVRTIAGTFTMHQELEKKLAAFKKTEAALVFQSGFTTNQGVLSSILSKEDIVISDELNHASIIDGIRLTKADKKVYQHVNMSDLERVLRKSMNYRMRLIVTDGVFSMDGNIAPLPDIVELAEKYDAFVMVDDAHASGVLGENGRGTVNHFGLDGRVHIQVGTLSKAIGVLGGYAAGSKVLIDYLRHKGRPFLFSTSHPPAVTAACMEAIDVLLEEPEHMERLWENTAYFKAMLVKMGLTLTKSETPILPILIGDEGVAKQFSDQLLSRGVFAQSIVFPTVAKGKARIRTIITAEHTKDELDQALDVIEKTAKELQLL</sequence>
<comment type="function">
    <text evidence="1">Catalyzes the decarboxylative condensation of pimeloyl-[acyl-carrier protein] and L-alanine to produce 8-amino-7-oxononanoate (AON), [acyl-carrier protein], and carbon dioxide.</text>
</comment>
<comment type="catalytic activity">
    <reaction>
        <text>6-carboxyhexanoyl-[ACP] + L-alanine + H(+) = (8S)-8-amino-7-oxononanoate + holo-[ACP] + CO2</text>
        <dbReference type="Rhea" id="RHEA:42288"/>
        <dbReference type="Rhea" id="RHEA-COMP:9685"/>
        <dbReference type="Rhea" id="RHEA-COMP:9955"/>
        <dbReference type="ChEBI" id="CHEBI:15378"/>
        <dbReference type="ChEBI" id="CHEBI:16526"/>
        <dbReference type="ChEBI" id="CHEBI:57972"/>
        <dbReference type="ChEBI" id="CHEBI:64479"/>
        <dbReference type="ChEBI" id="CHEBI:78846"/>
        <dbReference type="ChEBI" id="CHEBI:149468"/>
        <dbReference type="EC" id="2.3.1.47"/>
    </reaction>
</comment>
<comment type="cofactor">
    <cofactor>
        <name>pyridoxal 5'-phosphate</name>
        <dbReference type="ChEBI" id="CHEBI:597326"/>
    </cofactor>
</comment>
<comment type="pathway">
    <text>Cofactor biosynthesis; biotin biosynthesis.</text>
</comment>
<comment type="subunit">
    <text evidence="1">Homodimer.</text>
</comment>
<comment type="similarity">
    <text evidence="2">Belongs to the class-II pyridoxal-phosphate-dependent aminotransferase family. BioF subfamily.</text>
</comment>
<protein>
    <recommendedName>
        <fullName>8-amino-7-oxononanoate synthase 1</fullName>
        <shortName>AONS</shortName>
        <ecNumber>2.3.1.47</ecNumber>
    </recommendedName>
    <alternativeName>
        <fullName>7-keto-8-amino-pelargonic acid synthase</fullName>
        <shortName>7-KAP synthase</shortName>
        <shortName>KAPA synthase</shortName>
    </alternativeName>
    <alternativeName>
        <fullName>8-amino-7-ketopelargonate synthase</fullName>
    </alternativeName>
    <alternativeName>
        <fullName>Alpha-oxoamine synthase</fullName>
    </alternativeName>
</protein>
<organism>
    <name type="scientific">Bacillus subtilis (strain 168)</name>
    <dbReference type="NCBI Taxonomy" id="224308"/>
    <lineage>
        <taxon>Bacteria</taxon>
        <taxon>Bacillati</taxon>
        <taxon>Bacillota</taxon>
        <taxon>Bacilli</taxon>
        <taxon>Bacillales</taxon>
        <taxon>Bacillaceae</taxon>
        <taxon>Bacillus</taxon>
    </lineage>
</organism>
<feature type="chain" id="PRO_0000163835" description="8-amino-7-oxononanoate synthase 1">
    <location>
        <begin position="1"/>
        <end position="392"/>
    </location>
</feature>
<feature type="binding site" evidence="1">
    <location>
        <begin position="109"/>
        <end position="110"/>
    </location>
    <ligand>
        <name>pyridoxal 5'-phosphate</name>
        <dbReference type="ChEBI" id="CHEBI:597326"/>
    </ligand>
</feature>
<feature type="binding site" evidence="1">
    <location>
        <position position="134"/>
    </location>
    <ligand>
        <name>substrate</name>
    </ligand>
</feature>
<feature type="binding site" evidence="1">
    <location>
        <position position="181"/>
    </location>
    <ligand>
        <name>pyridoxal 5'-phosphate</name>
        <dbReference type="ChEBI" id="CHEBI:597326"/>
    </ligand>
</feature>
<feature type="binding site" evidence="1">
    <location>
        <begin position="206"/>
        <end position="209"/>
    </location>
    <ligand>
        <name>pyridoxal 5'-phosphate</name>
        <dbReference type="ChEBI" id="CHEBI:597326"/>
    </ligand>
</feature>
<feature type="binding site" evidence="1">
    <location>
        <begin position="237"/>
        <end position="240"/>
    </location>
    <ligand>
        <name>pyridoxal 5'-phosphate</name>
        <dbReference type="ChEBI" id="CHEBI:597326"/>
    </ligand>
</feature>
<feature type="binding site" evidence="1">
    <location>
        <position position="354"/>
    </location>
    <ligand>
        <name>substrate</name>
    </ligand>
</feature>
<feature type="modified residue" description="N6-(pyridoxal phosphate)lysine" evidence="2">
    <location>
        <position position="240"/>
    </location>
</feature>
<gene>
    <name type="primary">kbl</name>
    <name type="ordered locus">BSU17000</name>
</gene>
<name>BIOF1_BACSU</name>
<accession>O31777</accession>
<reference key="1">
    <citation type="journal article" date="1997" name="Nature">
        <title>The complete genome sequence of the Gram-positive bacterium Bacillus subtilis.</title>
        <authorList>
            <person name="Kunst F."/>
            <person name="Ogasawara N."/>
            <person name="Moszer I."/>
            <person name="Albertini A.M."/>
            <person name="Alloni G."/>
            <person name="Azevedo V."/>
            <person name="Bertero M.G."/>
            <person name="Bessieres P."/>
            <person name="Bolotin A."/>
            <person name="Borchert S."/>
            <person name="Borriss R."/>
            <person name="Boursier L."/>
            <person name="Brans A."/>
            <person name="Braun M."/>
            <person name="Brignell S.C."/>
            <person name="Bron S."/>
            <person name="Brouillet S."/>
            <person name="Bruschi C.V."/>
            <person name="Caldwell B."/>
            <person name="Capuano V."/>
            <person name="Carter N.M."/>
            <person name="Choi S.-K."/>
            <person name="Codani J.-J."/>
            <person name="Connerton I.F."/>
            <person name="Cummings N.J."/>
            <person name="Daniel R.A."/>
            <person name="Denizot F."/>
            <person name="Devine K.M."/>
            <person name="Duesterhoeft A."/>
            <person name="Ehrlich S.D."/>
            <person name="Emmerson P.T."/>
            <person name="Entian K.-D."/>
            <person name="Errington J."/>
            <person name="Fabret C."/>
            <person name="Ferrari E."/>
            <person name="Foulger D."/>
            <person name="Fritz C."/>
            <person name="Fujita M."/>
            <person name="Fujita Y."/>
            <person name="Fuma S."/>
            <person name="Galizzi A."/>
            <person name="Galleron N."/>
            <person name="Ghim S.-Y."/>
            <person name="Glaser P."/>
            <person name="Goffeau A."/>
            <person name="Golightly E.J."/>
            <person name="Grandi G."/>
            <person name="Guiseppi G."/>
            <person name="Guy B.J."/>
            <person name="Haga K."/>
            <person name="Haiech J."/>
            <person name="Harwood C.R."/>
            <person name="Henaut A."/>
            <person name="Hilbert H."/>
            <person name="Holsappel S."/>
            <person name="Hosono S."/>
            <person name="Hullo M.-F."/>
            <person name="Itaya M."/>
            <person name="Jones L.-M."/>
            <person name="Joris B."/>
            <person name="Karamata D."/>
            <person name="Kasahara Y."/>
            <person name="Klaerr-Blanchard M."/>
            <person name="Klein C."/>
            <person name="Kobayashi Y."/>
            <person name="Koetter P."/>
            <person name="Koningstein G."/>
            <person name="Krogh S."/>
            <person name="Kumano M."/>
            <person name="Kurita K."/>
            <person name="Lapidus A."/>
            <person name="Lardinois S."/>
            <person name="Lauber J."/>
            <person name="Lazarevic V."/>
            <person name="Lee S.-M."/>
            <person name="Levine A."/>
            <person name="Liu H."/>
            <person name="Masuda S."/>
            <person name="Mauel C."/>
            <person name="Medigue C."/>
            <person name="Medina N."/>
            <person name="Mellado R.P."/>
            <person name="Mizuno M."/>
            <person name="Moestl D."/>
            <person name="Nakai S."/>
            <person name="Noback M."/>
            <person name="Noone D."/>
            <person name="O'Reilly M."/>
            <person name="Ogawa K."/>
            <person name="Ogiwara A."/>
            <person name="Oudega B."/>
            <person name="Park S.-H."/>
            <person name="Parro V."/>
            <person name="Pohl T.M."/>
            <person name="Portetelle D."/>
            <person name="Porwollik S."/>
            <person name="Prescott A.M."/>
            <person name="Presecan E."/>
            <person name="Pujic P."/>
            <person name="Purnelle B."/>
            <person name="Rapoport G."/>
            <person name="Rey M."/>
            <person name="Reynolds S."/>
            <person name="Rieger M."/>
            <person name="Rivolta C."/>
            <person name="Rocha E."/>
            <person name="Roche B."/>
            <person name="Rose M."/>
            <person name="Sadaie Y."/>
            <person name="Sato T."/>
            <person name="Scanlan E."/>
            <person name="Schleich S."/>
            <person name="Schroeter R."/>
            <person name="Scoffone F."/>
            <person name="Sekiguchi J."/>
            <person name="Sekowska A."/>
            <person name="Seror S.J."/>
            <person name="Serror P."/>
            <person name="Shin B.-S."/>
            <person name="Soldo B."/>
            <person name="Sorokin A."/>
            <person name="Tacconi E."/>
            <person name="Takagi T."/>
            <person name="Takahashi H."/>
            <person name="Takemaru K."/>
            <person name="Takeuchi M."/>
            <person name="Tamakoshi A."/>
            <person name="Tanaka T."/>
            <person name="Terpstra P."/>
            <person name="Tognoni A."/>
            <person name="Tosato V."/>
            <person name="Uchiyama S."/>
            <person name="Vandenbol M."/>
            <person name="Vannier F."/>
            <person name="Vassarotti A."/>
            <person name="Viari A."/>
            <person name="Wambutt R."/>
            <person name="Wedler E."/>
            <person name="Wedler H."/>
            <person name="Weitzenegger T."/>
            <person name="Winters P."/>
            <person name="Wipat A."/>
            <person name="Yamamoto H."/>
            <person name="Yamane K."/>
            <person name="Yasumoto K."/>
            <person name="Yata K."/>
            <person name="Yoshida K."/>
            <person name="Yoshikawa H.-F."/>
            <person name="Zumstein E."/>
            <person name="Yoshikawa H."/>
            <person name="Danchin A."/>
        </authorList>
    </citation>
    <scope>NUCLEOTIDE SEQUENCE [LARGE SCALE GENOMIC DNA]</scope>
    <source>
        <strain>168</strain>
    </source>
</reference>
<evidence type="ECO:0000250" key="1"/>
<evidence type="ECO:0000305" key="2"/>
<proteinExistence type="inferred from homology"/>
<dbReference type="EC" id="2.3.1.47"/>
<dbReference type="EMBL" id="AL009126">
    <property type="protein sequence ID" value="CAB13573.1"/>
    <property type="molecule type" value="Genomic_DNA"/>
</dbReference>
<dbReference type="PIR" id="G69647">
    <property type="entry name" value="G69647"/>
</dbReference>
<dbReference type="RefSeq" id="NP_389582.1">
    <property type="nucleotide sequence ID" value="NC_000964.3"/>
</dbReference>
<dbReference type="RefSeq" id="WP_003231837.1">
    <property type="nucleotide sequence ID" value="NZ_OZ025638.1"/>
</dbReference>
<dbReference type="SMR" id="O31777"/>
<dbReference type="FunCoup" id="O31777">
    <property type="interactions" value="519"/>
</dbReference>
<dbReference type="STRING" id="224308.BSU17000"/>
<dbReference type="jPOST" id="O31777"/>
<dbReference type="PaxDb" id="224308-BSU17000"/>
<dbReference type="EnsemblBacteria" id="CAB13573">
    <property type="protein sequence ID" value="CAB13573"/>
    <property type="gene ID" value="BSU_17000"/>
</dbReference>
<dbReference type="GeneID" id="939651"/>
<dbReference type="KEGG" id="bsu:BSU17000"/>
<dbReference type="PATRIC" id="fig|224308.179.peg.1841"/>
<dbReference type="eggNOG" id="COG0156">
    <property type="taxonomic scope" value="Bacteria"/>
</dbReference>
<dbReference type="InParanoid" id="O31777"/>
<dbReference type="OrthoDB" id="9807157at2"/>
<dbReference type="PhylomeDB" id="O31777"/>
<dbReference type="BioCyc" id="BSUB:BSU17000-MONOMER"/>
<dbReference type="UniPathway" id="UPA00078"/>
<dbReference type="Proteomes" id="UP000001570">
    <property type="component" value="Chromosome"/>
</dbReference>
<dbReference type="GO" id="GO:0008710">
    <property type="term" value="F:8-amino-7-oxononanoate synthase activity"/>
    <property type="evidence" value="ECO:0000250"/>
    <property type="project" value="UniProtKB"/>
</dbReference>
<dbReference type="GO" id="GO:0008890">
    <property type="term" value="F:glycine C-acetyltransferase activity"/>
    <property type="evidence" value="ECO:0000250"/>
    <property type="project" value="UniProtKB"/>
</dbReference>
<dbReference type="GO" id="GO:0030170">
    <property type="term" value="F:pyridoxal phosphate binding"/>
    <property type="evidence" value="ECO:0000250"/>
    <property type="project" value="UniProtKB"/>
</dbReference>
<dbReference type="GO" id="GO:0009102">
    <property type="term" value="P:biotin biosynthetic process"/>
    <property type="evidence" value="ECO:0000250"/>
    <property type="project" value="UniProtKB"/>
</dbReference>
<dbReference type="CDD" id="cd06454">
    <property type="entry name" value="KBL_like"/>
    <property type="match status" value="1"/>
</dbReference>
<dbReference type="FunFam" id="3.40.640.10:FF:000006">
    <property type="entry name" value="5-aminolevulinate synthase, mitochondrial"/>
    <property type="match status" value="1"/>
</dbReference>
<dbReference type="Gene3D" id="3.90.1150.10">
    <property type="entry name" value="Aspartate Aminotransferase, domain 1"/>
    <property type="match status" value="1"/>
</dbReference>
<dbReference type="Gene3D" id="3.40.640.10">
    <property type="entry name" value="Type I PLP-dependent aspartate aminotransferase-like (Major domain)"/>
    <property type="match status" value="1"/>
</dbReference>
<dbReference type="InterPro" id="IPR001917">
    <property type="entry name" value="Aminotrans_II_pyridoxalP_BS"/>
</dbReference>
<dbReference type="InterPro" id="IPR004839">
    <property type="entry name" value="Aminotransferase_I/II_large"/>
</dbReference>
<dbReference type="InterPro" id="IPR050087">
    <property type="entry name" value="AON_synthase_class-II"/>
</dbReference>
<dbReference type="InterPro" id="IPR010962">
    <property type="entry name" value="AONS_Archaea/Firmicutes"/>
</dbReference>
<dbReference type="InterPro" id="IPR004723">
    <property type="entry name" value="AONS_Archaea/Proteobacteria"/>
</dbReference>
<dbReference type="InterPro" id="IPR015424">
    <property type="entry name" value="PyrdxlP-dep_Trfase"/>
</dbReference>
<dbReference type="InterPro" id="IPR015421">
    <property type="entry name" value="PyrdxlP-dep_Trfase_major"/>
</dbReference>
<dbReference type="InterPro" id="IPR015422">
    <property type="entry name" value="PyrdxlP-dep_Trfase_small"/>
</dbReference>
<dbReference type="NCBIfam" id="TIGR00858">
    <property type="entry name" value="bioF"/>
    <property type="match status" value="1"/>
</dbReference>
<dbReference type="NCBIfam" id="TIGR01825">
    <property type="entry name" value="gly_Cac_T_rel"/>
    <property type="match status" value="1"/>
</dbReference>
<dbReference type="NCBIfam" id="NF005394">
    <property type="entry name" value="PRK06939.1"/>
    <property type="match status" value="1"/>
</dbReference>
<dbReference type="PANTHER" id="PTHR13693">
    <property type="entry name" value="CLASS II AMINOTRANSFERASE/8-AMINO-7-OXONONANOATE SYNTHASE"/>
    <property type="match status" value="1"/>
</dbReference>
<dbReference type="PANTHER" id="PTHR13693:SF3">
    <property type="entry name" value="LD36009P"/>
    <property type="match status" value="1"/>
</dbReference>
<dbReference type="Pfam" id="PF00155">
    <property type="entry name" value="Aminotran_1_2"/>
    <property type="match status" value="1"/>
</dbReference>
<dbReference type="SUPFAM" id="SSF53383">
    <property type="entry name" value="PLP-dependent transferases"/>
    <property type="match status" value="1"/>
</dbReference>
<dbReference type="PROSITE" id="PS00599">
    <property type="entry name" value="AA_TRANSFER_CLASS_2"/>
    <property type="match status" value="1"/>
</dbReference>